<keyword id="KW-0167">Capsid protein</keyword>
<keyword id="KW-0175">Coiled coil</keyword>
<keyword id="KW-1015">Disulfide bond</keyword>
<keyword id="KW-0348">Hemagglutinin</keyword>
<keyword id="KW-1032">Host cell membrane</keyword>
<keyword id="KW-1035">Host cytoplasm</keyword>
<keyword id="KW-1037">Host cytoskeleton</keyword>
<keyword id="KW-1038">Host endoplasmic reticulum</keyword>
<keyword id="KW-1043">Host membrane</keyword>
<keyword id="KW-0945">Host-virus interaction</keyword>
<keyword id="KW-0472">Membrane</keyword>
<keyword id="KW-1152">Outer capsid protein</keyword>
<keyword id="KW-1161">Viral attachment to host cell</keyword>
<keyword id="KW-1162">Viral penetration into host cytoplasm</keyword>
<keyword id="KW-1173">Viral penetration via permeabilization of host membrane</keyword>
<keyword id="KW-0946">Virion</keyword>
<keyword id="KW-1160">Virus entry into host cell</keyword>
<name>VP4_ROTHL</name>
<organismHost>
    <name type="scientific">Homo sapiens</name>
    <name type="common">Human</name>
    <dbReference type="NCBI Taxonomy" id="9606"/>
</organismHost>
<organism>
    <name type="scientific">Rotavirus A (strain RVA/Human/Philippines/L26/1987/G12P1B[4])</name>
    <name type="common">RV-A</name>
    <dbReference type="NCBI Taxonomy" id="10953"/>
    <lineage>
        <taxon>Viruses</taxon>
        <taxon>Riboviria</taxon>
        <taxon>Orthornavirae</taxon>
        <taxon>Duplornaviricota</taxon>
        <taxon>Resentoviricetes</taxon>
        <taxon>Reovirales</taxon>
        <taxon>Sedoreoviridae</taxon>
        <taxon>Rotavirus</taxon>
        <taxon>Rotavirus A</taxon>
    </lineage>
</organism>
<sequence>MASLIYRQLLTNSYSVDLHDEIEQIGSEKTQNVTINPGPFAQTRYAPVNWRHGEINDSTTVEPVLDGPYQPTTFKPPNDYWLLISSNTDGVVYESTNNSDFWTAVIAVEPRVSQTNRQYILFGENKQFNIENNSDKWKFFEMFKGSSQSNFSNRRTLTSNNRLVGMLKYGGRVWTFHGETPRATTDSSNTADLNNISIVIHSEFYIIPRSQESKCNEYINNGLPPIQNTRNVVPLSLSSRSIQYRRAQVNEDITISKTSLWKEMQYNRDIIIRFKFGNSVIKLGGLGYKWSEISYKAANYQYSYSRDGEQVTAHTTCSVNGVNNFSYNGGSLPTDFSISRYEVIKENSYVYIDYWDDSKAFRNMVYVRSLAANLNSVKCAGGSYNFRLPVGEWPIMNGGAVSLHFAGVTLSTQFTNFVSLNSLRFRFSLTVDEPSFSIIRTRTVNLYGLPAANPNNGNEYYEMSGRFSLISLVPTNDDYQTPIMNSVTVRQDLERQLSDLREEFNSLSQEIAMSQLIDLALLPLDMFSMFSGIKSTIDLTKSMATSVMKKFRKSKLATSISEMTNSLSDAASSASRSASVRSNLSVISNWTDASKSTSNITDLVNDVSTQTSTISKKLRLKEMITQTEGMSFDDISAAVLKTKIDMSTQIGKNTLPDIVTEASEKFIPKRSYRVLKDNEVMEINTEGKFFAYKVDTLNEIPFDINKFAELVTDSPVISAIIDFKTLKNLNDNYGITRMEALNLIKSNPNVLRNFINQNNPIIRNRIEQLILQCKL</sequence>
<dbReference type="EMBL" id="M58292">
    <property type="protein sequence ID" value="AAA47335.1"/>
    <property type="molecule type" value="Genomic_RNA"/>
</dbReference>
<dbReference type="EMBL" id="EF672591">
    <property type="protein sequence ID" value="ABV53268.1"/>
    <property type="molecule type" value="Genomic_RNA"/>
</dbReference>
<dbReference type="PIR" id="A36410">
    <property type="entry name" value="VPXRWL"/>
</dbReference>
<dbReference type="PIR" id="C36410">
    <property type="entry name" value="VPXRWM"/>
</dbReference>
<dbReference type="SMR" id="P21284"/>
<dbReference type="Proteomes" id="UP000001459">
    <property type="component" value="Genome"/>
</dbReference>
<dbReference type="GO" id="GO:0044172">
    <property type="term" value="C:host cell endoplasmic reticulum-Golgi intermediate compartment"/>
    <property type="evidence" value="ECO:0007669"/>
    <property type="project" value="UniProtKB-SubCell"/>
</dbReference>
<dbReference type="GO" id="GO:0020002">
    <property type="term" value="C:host cell plasma membrane"/>
    <property type="evidence" value="ECO:0007669"/>
    <property type="project" value="UniProtKB-SubCell"/>
</dbReference>
<dbReference type="GO" id="GO:0044168">
    <property type="term" value="C:host cell rough endoplasmic reticulum"/>
    <property type="evidence" value="ECO:0007669"/>
    <property type="project" value="UniProtKB-SubCell"/>
</dbReference>
<dbReference type="GO" id="GO:0044163">
    <property type="term" value="C:host cytoskeleton"/>
    <property type="evidence" value="ECO:0007669"/>
    <property type="project" value="UniProtKB-SubCell"/>
</dbReference>
<dbReference type="GO" id="GO:0016020">
    <property type="term" value="C:membrane"/>
    <property type="evidence" value="ECO:0007669"/>
    <property type="project" value="UniProtKB-KW"/>
</dbReference>
<dbReference type="GO" id="GO:0039624">
    <property type="term" value="C:viral outer capsid"/>
    <property type="evidence" value="ECO:0007669"/>
    <property type="project" value="UniProtKB-UniRule"/>
</dbReference>
<dbReference type="GO" id="GO:0039665">
    <property type="term" value="P:permeabilization of host organelle membrane involved in viral entry into host cell"/>
    <property type="evidence" value="ECO:0007669"/>
    <property type="project" value="UniProtKB-UniRule"/>
</dbReference>
<dbReference type="GO" id="GO:0019062">
    <property type="term" value="P:virion attachment to host cell"/>
    <property type="evidence" value="ECO:0007669"/>
    <property type="project" value="UniProtKB-UniRule"/>
</dbReference>
<dbReference type="Gene3D" id="1.20.5.170">
    <property type="match status" value="1"/>
</dbReference>
<dbReference type="Gene3D" id="2.60.120.200">
    <property type="match status" value="1"/>
</dbReference>
<dbReference type="HAMAP" id="MF_04132">
    <property type="entry name" value="Rota_A_VP4"/>
    <property type="match status" value="1"/>
</dbReference>
<dbReference type="HAMAP" id="MF_04125">
    <property type="entry name" value="Rota_VP4"/>
    <property type="match status" value="1"/>
</dbReference>
<dbReference type="InterPro" id="IPR013320">
    <property type="entry name" value="ConA-like_dom_sf"/>
</dbReference>
<dbReference type="InterPro" id="IPR042546">
    <property type="entry name" value="Rota_A_VP4"/>
</dbReference>
<dbReference type="InterPro" id="IPR035330">
    <property type="entry name" value="Rota_VP4_MID"/>
</dbReference>
<dbReference type="InterPro" id="IPR038017">
    <property type="entry name" value="Rota_VP4_MID_sf"/>
</dbReference>
<dbReference type="InterPro" id="IPR000416">
    <property type="entry name" value="VP4_concanavalin-like"/>
</dbReference>
<dbReference type="InterPro" id="IPR035329">
    <property type="entry name" value="VP4_helical"/>
</dbReference>
<dbReference type="Pfam" id="PF17477">
    <property type="entry name" value="Rota_VP4_MID"/>
    <property type="match status" value="1"/>
</dbReference>
<dbReference type="Pfam" id="PF00426">
    <property type="entry name" value="VP4_haemagglut"/>
    <property type="match status" value="1"/>
</dbReference>
<dbReference type="Pfam" id="PF17478">
    <property type="entry name" value="VP4_helical"/>
    <property type="match status" value="1"/>
</dbReference>
<dbReference type="SUPFAM" id="SSF49899">
    <property type="entry name" value="Concanavalin A-like lectins/glucanases"/>
    <property type="match status" value="1"/>
</dbReference>
<dbReference type="SUPFAM" id="SSF111379">
    <property type="entry name" value="VP4 membrane interaction domain"/>
    <property type="match status" value="1"/>
</dbReference>
<proteinExistence type="inferred from homology"/>
<reference key="1">
    <citation type="journal article" date="1990" name="J. Virol.">
        <title>Nucleotide sequence of VP4 and VP7 genes of human rotaviruses with subgroup I specificity and long RNA pattern: implication for new G serotype specificity.</title>
        <authorList>
            <person name="Taniguchi K."/>
            <person name="Urasawa T."/>
            <person name="Kobayashi N."/>
            <person name="Gorziglia M."/>
            <person name="Urasawa S."/>
        </authorList>
    </citation>
    <scope>NUCLEOTIDE SEQUENCE [GENOMIC RNA]</scope>
    <source>
        <strain>L26</strain>
        <strain>L27</strain>
    </source>
</reference>
<reference key="2">
    <citation type="journal article" date="2008" name="J. Virol.">
        <title>Group A human rotavirus genomics: evidence that gene constellations are influenced by viral protein interactions.</title>
        <authorList>
            <person name="Heiman E.M."/>
            <person name="McDonald S.M."/>
            <person name="Barro M."/>
            <person name="Taraporewala Z.F."/>
            <person name="Bar-Magen T."/>
            <person name="Patton J.T."/>
        </authorList>
    </citation>
    <scope>NUCLEOTIDE SEQUENCE [GENOMIC RNA]</scope>
</reference>
<reference key="3">
    <citation type="journal article" date="2002" name="J. Virol.">
        <title>Initial interaction of rotavirus strains with N-acetylneuraminic (sialic) acid residues on the cell surface correlates with VP4 genotype, not species of origin.</title>
        <authorList>
            <person name="Ciarlet M."/>
            <person name="Ludert J.E."/>
            <person name="Iturriza-Gomara M."/>
            <person name="Liprandi F."/>
            <person name="Gray J.J."/>
            <person name="Desselberger U."/>
            <person name="Estes M.K."/>
        </authorList>
    </citation>
    <scope>SIALIC ACID INDEPENDENCY</scope>
</reference>
<reference key="4">
    <citation type="journal article" date="2006" name="Glycoconj. J.">
        <title>Role of sialic acids in rotavirus infection.</title>
        <authorList>
            <person name="Isa P."/>
            <person name="Arias C.F."/>
            <person name="Lopez S."/>
        </authorList>
    </citation>
    <scope>REVIEW</scope>
</reference>
<evidence type="ECO:0000255" key="1">
    <source>
        <dbReference type="HAMAP-Rule" id="MF_04132"/>
    </source>
</evidence>
<evidence type="ECO:0000269" key="2">
    <source>
    </source>
</evidence>
<evidence type="ECO:0000303" key="3">
    <source>
    </source>
</evidence>
<evidence type="ECO:0000305" key="4"/>
<feature type="chain" id="PRO_0000041063" description="Outer capsid protein VP4" evidence="1">
    <location>
        <begin position="1"/>
        <end position="775"/>
    </location>
</feature>
<feature type="chain" id="PRO_0000041064" description="Outer capsid protein VP8*" evidence="1">
    <location>
        <begin position="1"/>
        <end position="230"/>
    </location>
</feature>
<feature type="chain" id="PRO_0000041065" description="Outer capsid protein VP5*" evidence="1">
    <location>
        <begin position="247"/>
        <end position="775"/>
    </location>
</feature>
<feature type="region of interest" description="Spike head" evidence="1">
    <location>
        <begin position="65"/>
        <end position="223"/>
    </location>
</feature>
<feature type="region of interest" description="Spike body and stalk (antigen domain)" evidence="1">
    <location>
        <begin position="247"/>
        <end position="478"/>
    </location>
</feature>
<feature type="region of interest" description="Hydrophobic; possible role in virus entry into host cell" evidence="1">
    <location>
        <begin position="388"/>
        <end position="408"/>
    </location>
</feature>
<feature type="region of interest" description="Spike foot" evidence="1">
    <location>
        <begin position="509"/>
        <end position="775"/>
    </location>
</feature>
<feature type="coiled-coil region" evidence="1">
    <location>
        <begin position="483"/>
        <end position="510"/>
    </location>
</feature>
<feature type="short sequence motif" description="DGE motif; interaction with ITGA2/ITGB1 heterodimer" evidence="1">
    <location>
        <begin position="307"/>
        <end position="309"/>
    </location>
</feature>
<feature type="short sequence motif" description="YGL motif; interaction with ITGA4" evidence="1">
    <location>
        <begin position="447"/>
        <end position="449"/>
    </location>
</feature>
<feature type="short sequence motif" description="KID motif; interaction with HSPA8" evidence="1">
    <location>
        <begin position="643"/>
        <end position="645"/>
    </location>
</feature>
<feature type="site" description="Cleavage" evidence="1">
    <location>
        <begin position="230"/>
        <end position="231"/>
    </location>
</feature>
<feature type="site" description="Cleavage" evidence="1">
    <location>
        <begin position="240"/>
        <end position="241"/>
    </location>
</feature>
<feature type="site" description="Cleavage; associated with enhancement of infectivity" evidence="1">
    <location>
        <begin position="246"/>
        <end position="247"/>
    </location>
</feature>
<feature type="disulfide bond" evidence="1">
    <location>
        <begin position="317"/>
        <end position="379"/>
    </location>
</feature>
<feature type="sequence variant" description="In strain: L27.">
    <original>R</original>
    <variation>G</variation>
    <location>
        <position position="51"/>
    </location>
</feature>
<feature type="sequence variant" description="In strain: L27.">
    <original>E</original>
    <variation>K</variation>
    <location>
        <position position="392"/>
    </location>
</feature>
<feature type="sequence variant" description="In strain: L27.">
    <original>F</original>
    <variation>C</variation>
    <location>
        <position position="405"/>
    </location>
</feature>
<feature type="sequence conflict" description="In Ref. 2; ABV53268." evidence="4" ref="2">
    <original>N</original>
    <variation>D</variation>
    <location>
        <position position="150"/>
    </location>
</feature>
<feature type="sequence conflict" description="In Ref. 2; ABV53268." evidence="4" ref="2">
    <original>N</original>
    <variation>D</variation>
    <location>
        <position position="416"/>
    </location>
</feature>
<feature type="sequence conflict" description="In Ref. 2; ABV53268." evidence="4" ref="2">
    <original>Y</original>
    <variation>H</variation>
    <location>
        <position position="479"/>
    </location>
</feature>
<accession>P21284</accession>
<accession>B3SRU3</accession>
<protein>
    <recommendedName>
        <fullName evidence="1">Outer capsid protein VP4</fullName>
    </recommendedName>
    <alternativeName>
        <fullName evidence="1">Hemagglutinin</fullName>
    </alternativeName>
    <component>
        <recommendedName>
            <fullName evidence="1">Outer capsid protein VP8*</fullName>
        </recommendedName>
    </component>
    <component>
        <recommendedName>
            <fullName evidence="1">Outer capsid protein VP5*</fullName>
        </recommendedName>
    </component>
</protein>
<comment type="function">
    <molecule>Outer capsid protein VP4</molecule>
    <text evidence="1">Spike-forming protein that mediates virion attachment to the host epithelial cell receptors and plays a major role in cell penetration, determination of host range restriction and virulence. Rotavirus attachment and entry into the host cell probably involves multiple sequential contacts between the outer capsid proteins VP4 and VP7, and the cell receptors. It is subsequently lost, together with VP7, following virus entry into the host cell. Following entry into the host cell, low intracellular or intravesicular Ca(2+) concentration probably causes the calcium-stabilized VP7 trimers to dissociate from the virion. This step is probably necessary for the membrane-disrupting entry step and the release of VP4, which is locked onto the virion by VP7. During the virus exit from the host cell, VP4 seems to be required to target the newly formed virions to the host cell lipid rafts.</text>
</comment>
<comment type="function">
    <molecule>Outer capsid protein VP5*</molecule>
    <text evidence="1">Forms the spike 'foot' and 'body' and acts as a membrane permeabilization protein that mediates release of viral particles from endosomal compartments into the cytoplasm. During entry, the part of VP5* that protrudes from the virus folds back on itself and reorganizes from a local dimer to a trimer. This reorganization may be linked to membrane penetration by exposing VP5* hydrophobic region. In integrin-dependent strains, VP5* targets the integrin heterodimer ITGA2/ITGB1 for cell attachment.</text>
</comment>
<comment type="function">
    <molecule>Outer capsid protein VP8*</molecule>
    <text evidence="1">Forms the head of the spikes and mediates the recognition of specific host cell surface glycans. It is the viral hemagglutinin and an important target of neutralizing antibodies. In sialic acid-dependent strains, VP8* binds to host cell sialic acid, most probably a ganglioside, providing the initial contact. In some other strains, VP8* mediates the attachment to histo-blood group antigens (HBGAs) for viral entry.</text>
</comment>
<comment type="subunit">
    <molecule>Outer capsid protein VP4</molecule>
    <text evidence="1">Homotrimer. VP4 adopts a dimeric appearance above the capsid surface, while forming a trimeric base anchored inside the capsid layer. Only hints of the third molecule are observed above the capsid surface. It probably performs a series of molecular rearrangements during viral entry. Prior to trypsin cleavage, it is flexible. The priming trypsin cleavage triggers its rearrangement into rigid spikes with approximate two-fold symmetry of their protruding parts. After an unknown second triggering event, cleaved VP4 may undergo another rearrangement, in which two VP5* subunits fold back on themselves and join a third subunit to form a tightly associated trimer, shaped like a folded umbrella. Interacts with VP6. Interacts with VP7.</text>
</comment>
<comment type="subunit">
    <molecule>Outer capsid protein VP5*</molecule>
    <text evidence="1">Homotrimer. The trimer is coiled-coil stabilized by its C-terminus, however, its N-terminus, known as antigen domain or 'body', seems to be flexible allowing it to self-associate either as a dimer or a trimer.</text>
</comment>
<comment type="subcellular location">
    <molecule>Outer capsid protein VP4</molecule>
    <subcellularLocation>
        <location evidence="1">Virion</location>
    </subcellularLocation>
    <subcellularLocation>
        <location evidence="1">Host rough endoplasmic reticulum</location>
    </subcellularLocation>
    <subcellularLocation>
        <location evidence="1">Host cell membrane</location>
    </subcellularLocation>
    <subcellularLocation>
        <location evidence="1">Host cytoplasm</location>
        <location evidence="1">Host cytoskeleton</location>
    </subcellularLocation>
    <subcellularLocation>
        <location evidence="1">Host endoplasmic reticulum-Golgi intermediate compartment</location>
    </subcellularLocation>
    <text evidence="1">The outer layer contains 180 copies of VP4, grouped as 60 dimers. Immature double-layered particles assembled in the cytoplasm bud across the membrane of the endoplasmic reticulum, acquiring during this process a transient lipid membrane that is modified with the ER resident viral glycoproteins NSP4 and VP7; these enveloped particles also contain VP4. As the particles move towards the interior of the ER cisternae, the transient lipid membrane and the non-structural protein NSP4 are lost, while the virus surface proteins VP4 and VP7 rearrange to form the outermost virus protein layer, yielding mature infectious triple-layered particles. VP4 also seems to associate with lipid rafts of the host cell membrane probably for the exit of the virus from the infected cell by an alternate pathway.</text>
</comment>
<comment type="subcellular location">
    <molecule>Outer capsid protein VP8*</molecule>
    <subcellularLocation>
        <location evidence="1">Virion</location>
    </subcellularLocation>
    <text evidence="1">Outer capsid protein.</text>
</comment>
<comment type="subcellular location">
    <molecule>Outer capsid protein VP5*</molecule>
    <subcellularLocation>
        <location evidence="1">Virion</location>
    </subcellularLocation>
    <text evidence="1">Outer capsid protein.</text>
</comment>
<comment type="domain">
    <molecule>Outer capsid protein VP4</molecule>
    <text evidence="1">The VP4 spike is divided into a foot, a stalk and body, and a head.</text>
</comment>
<comment type="PTM">
    <molecule>Outer capsid protein VP4</molecule>
    <text evidence="1">Proteolytic cleavage by trypsin results in activation of VP4 functions and greatly increases infectivity. The penetration into the host cell is dependent on trypsin treatment of VP4. It produces two peptides, VP5* and VP8* that remain associated with the virion. Cleavage of VP4 by trypsin probably occurs in vivo in the lumen of the intestine prior to infection of enterocytes. Trypsin seems to be incorporated into the three-layered viral particles but remains inactive as long as the viral outer capsid is intact and would only be activated upon the solubilization of the latter.</text>
</comment>
<comment type="miscellaneous">
    <text evidence="2 3">This strain probably does not use sialic acid to attach to the host cell.</text>
</comment>
<comment type="miscellaneous">
    <text evidence="1">In group A rotaviruses, VP4 defines the P serotype.</text>
</comment>
<comment type="miscellaneous">
    <text evidence="1">Some rotavirus strains are neuraminidase-sensitive and require sialic acid to attach to the cell surface. Some rotavirus strains are integrin-dependent. Some rotavirus strains depend on ganglioside for their entry into the host cell. Hsp70 also seems to be involved in the entry of some strains.</text>
</comment>
<comment type="similarity">
    <text evidence="1">Belongs to the rotavirus VP4 family.</text>
</comment>